<feature type="initiator methionine" description="Removed" evidence="2">
    <location>
        <position position="1"/>
    </location>
</feature>
<feature type="chain" id="PRO_1000008454" description="Holo-[acyl-carrier-protein] synthase">
    <location>
        <begin position="2"/>
        <end position="130"/>
    </location>
</feature>
<feature type="binding site" evidence="1">
    <location>
        <position position="9"/>
    </location>
    <ligand>
        <name>Mg(2+)</name>
        <dbReference type="ChEBI" id="CHEBI:18420"/>
    </ligand>
</feature>
<feature type="binding site" evidence="1">
    <location>
        <position position="58"/>
    </location>
    <ligand>
        <name>Mg(2+)</name>
        <dbReference type="ChEBI" id="CHEBI:18420"/>
    </ligand>
</feature>
<feature type="strand" evidence="3">
    <location>
        <begin position="3"/>
        <end position="12"/>
    </location>
</feature>
<feature type="helix" evidence="3">
    <location>
        <begin position="13"/>
        <end position="20"/>
    </location>
</feature>
<feature type="helix" evidence="3">
    <location>
        <begin position="25"/>
        <end position="28"/>
    </location>
</feature>
<feature type="helix" evidence="3">
    <location>
        <begin position="33"/>
        <end position="39"/>
    </location>
</feature>
<feature type="helix" evidence="3">
    <location>
        <begin position="45"/>
        <end position="65"/>
    </location>
</feature>
<feature type="strand" evidence="3">
    <location>
        <begin position="72"/>
        <end position="74"/>
    </location>
</feature>
<feature type="helix" evidence="3">
    <location>
        <begin position="79"/>
        <end position="82"/>
    </location>
</feature>
<feature type="strand" evidence="3">
    <location>
        <begin position="83"/>
        <end position="87"/>
    </location>
</feature>
<feature type="strand" evidence="3">
    <location>
        <begin position="93"/>
        <end position="97"/>
    </location>
</feature>
<feature type="helix" evidence="3">
    <location>
        <begin position="99"/>
        <end position="104"/>
    </location>
</feature>
<feature type="turn" evidence="3">
    <location>
        <begin position="105"/>
        <end position="107"/>
    </location>
</feature>
<feature type="strand" evidence="3">
    <location>
        <begin position="109"/>
        <end position="117"/>
    </location>
</feature>
<feature type="strand" evidence="3">
    <location>
        <begin position="120"/>
        <end position="128"/>
    </location>
</feature>
<protein>
    <recommendedName>
        <fullName evidence="1">Holo-[acyl-carrier-protein] synthase</fullName>
        <shortName evidence="1">Holo-ACP synthase</shortName>
        <ecNumber evidence="1">2.7.8.7</ecNumber>
    </recommendedName>
    <alternativeName>
        <fullName evidence="1">4'-phosphopantetheinyl transferase AcpS</fullName>
    </alternativeName>
</protein>
<organism>
    <name type="scientific">Mycolicibacterium smegmatis (strain ATCC 700084 / mc(2)155)</name>
    <name type="common">Mycobacterium smegmatis</name>
    <dbReference type="NCBI Taxonomy" id="246196"/>
    <lineage>
        <taxon>Bacteria</taxon>
        <taxon>Bacillati</taxon>
        <taxon>Actinomycetota</taxon>
        <taxon>Actinomycetes</taxon>
        <taxon>Mycobacteriales</taxon>
        <taxon>Mycobacteriaceae</taxon>
        <taxon>Mycolicibacterium</taxon>
    </lineage>
</organism>
<sequence length="130" mass="14165">MAIVGVGIDLVSIPDFAEQVDRPGTVFAETFTPGERRDAADKSSSAARHLAARWAAKEAVIKAWSSSRFSKRPALPEGIHRDIEVVTDMWGRPKVRLSGEIAKHLEDVTIHVSLTHEDQTAAAVAIIEEP</sequence>
<proteinExistence type="evidence at protein level"/>
<keyword id="KW-0002">3D-structure</keyword>
<keyword id="KW-0963">Cytoplasm</keyword>
<keyword id="KW-0275">Fatty acid biosynthesis</keyword>
<keyword id="KW-0276">Fatty acid metabolism</keyword>
<keyword id="KW-0444">Lipid biosynthesis</keyword>
<keyword id="KW-0443">Lipid metabolism</keyword>
<keyword id="KW-0460">Magnesium</keyword>
<keyword id="KW-0479">Metal-binding</keyword>
<keyword id="KW-1185">Reference proteome</keyword>
<keyword id="KW-0808">Transferase</keyword>
<evidence type="ECO:0000255" key="1">
    <source>
        <dbReference type="HAMAP-Rule" id="MF_00101"/>
    </source>
</evidence>
<evidence type="ECO:0000269" key="2">
    <source>
    </source>
</evidence>
<evidence type="ECO:0007829" key="3">
    <source>
        <dbReference type="PDB" id="3GWM"/>
    </source>
</evidence>
<name>ACPS_MYCS2</name>
<gene>
    <name evidence="1" type="primary">acpS</name>
    <name type="ordered locus">MSMEG_4756</name>
    <name type="ordered locus">MSMEI_4636</name>
</gene>
<dbReference type="EC" id="2.7.8.7" evidence="1"/>
<dbReference type="EMBL" id="CP000480">
    <property type="protein sequence ID" value="ABK75003.1"/>
    <property type="molecule type" value="Genomic_DNA"/>
</dbReference>
<dbReference type="EMBL" id="CP001663">
    <property type="protein sequence ID" value="AFP41085.1"/>
    <property type="molecule type" value="Genomic_DNA"/>
</dbReference>
<dbReference type="RefSeq" id="WP_003896157.1">
    <property type="nucleotide sequence ID" value="NZ_SIJM01000004.1"/>
</dbReference>
<dbReference type="RefSeq" id="YP_889014.1">
    <property type="nucleotide sequence ID" value="NC_008596.1"/>
</dbReference>
<dbReference type="PDB" id="3GWM">
    <property type="method" value="X-ray"/>
    <property type="resolution" value="1.70 A"/>
    <property type="chains" value="A=2-130"/>
</dbReference>
<dbReference type="PDB" id="7W58">
    <property type="method" value="X-ray"/>
    <property type="resolution" value="2.27 A"/>
    <property type="chains" value="A=1-130"/>
</dbReference>
<dbReference type="PDBsum" id="3GWM"/>
<dbReference type="PDBsum" id="7W58"/>
<dbReference type="SMR" id="A0R1H6"/>
<dbReference type="STRING" id="246196.MSMEG_4756"/>
<dbReference type="PaxDb" id="246196-MSMEI_4636"/>
<dbReference type="KEGG" id="msb:LJ00_23530"/>
<dbReference type="KEGG" id="msg:MSMEI_4636"/>
<dbReference type="KEGG" id="msm:MSMEG_4756"/>
<dbReference type="PATRIC" id="fig|246196.19.peg.4641"/>
<dbReference type="eggNOG" id="COG0736">
    <property type="taxonomic scope" value="Bacteria"/>
</dbReference>
<dbReference type="OrthoDB" id="517356at2"/>
<dbReference type="EvolutionaryTrace" id="A0R1H6"/>
<dbReference type="Proteomes" id="UP000000757">
    <property type="component" value="Chromosome"/>
</dbReference>
<dbReference type="Proteomes" id="UP000006158">
    <property type="component" value="Chromosome"/>
</dbReference>
<dbReference type="GO" id="GO:0005737">
    <property type="term" value="C:cytoplasm"/>
    <property type="evidence" value="ECO:0007669"/>
    <property type="project" value="UniProtKB-SubCell"/>
</dbReference>
<dbReference type="GO" id="GO:0008897">
    <property type="term" value="F:holo-[acyl-carrier-protein] synthase activity"/>
    <property type="evidence" value="ECO:0007669"/>
    <property type="project" value="UniProtKB-UniRule"/>
</dbReference>
<dbReference type="GO" id="GO:0000287">
    <property type="term" value="F:magnesium ion binding"/>
    <property type="evidence" value="ECO:0007669"/>
    <property type="project" value="UniProtKB-UniRule"/>
</dbReference>
<dbReference type="GO" id="GO:0006633">
    <property type="term" value="P:fatty acid biosynthetic process"/>
    <property type="evidence" value="ECO:0007669"/>
    <property type="project" value="UniProtKB-UniRule"/>
</dbReference>
<dbReference type="Gene3D" id="3.90.470.20">
    <property type="entry name" value="4'-phosphopantetheinyl transferase domain"/>
    <property type="match status" value="1"/>
</dbReference>
<dbReference type="HAMAP" id="MF_00101">
    <property type="entry name" value="AcpS"/>
    <property type="match status" value="1"/>
</dbReference>
<dbReference type="InterPro" id="IPR008278">
    <property type="entry name" value="4-PPantetheinyl_Trfase_dom"/>
</dbReference>
<dbReference type="InterPro" id="IPR037143">
    <property type="entry name" value="4-PPantetheinyl_Trfase_dom_sf"/>
</dbReference>
<dbReference type="InterPro" id="IPR002582">
    <property type="entry name" value="ACPS"/>
</dbReference>
<dbReference type="InterPro" id="IPR004568">
    <property type="entry name" value="Ppantetheine-prot_Trfase_dom"/>
</dbReference>
<dbReference type="NCBIfam" id="TIGR00516">
    <property type="entry name" value="acpS"/>
    <property type="match status" value="1"/>
</dbReference>
<dbReference type="NCBIfam" id="TIGR00556">
    <property type="entry name" value="pantethn_trn"/>
    <property type="match status" value="1"/>
</dbReference>
<dbReference type="NCBIfam" id="NF000831">
    <property type="entry name" value="PRK00070.3-1"/>
    <property type="match status" value="1"/>
</dbReference>
<dbReference type="Pfam" id="PF01648">
    <property type="entry name" value="ACPS"/>
    <property type="match status" value="1"/>
</dbReference>
<dbReference type="SUPFAM" id="SSF56214">
    <property type="entry name" value="4'-phosphopantetheinyl transferase"/>
    <property type="match status" value="1"/>
</dbReference>
<reference key="1">
    <citation type="submission" date="2006-10" db="EMBL/GenBank/DDBJ databases">
        <authorList>
            <person name="Fleischmann R.D."/>
            <person name="Dodson R.J."/>
            <person name="Haft D.H."/>
            <person name="Merkel J.S."/>
            <person name="Nelson W.C."/>
            <person name="Fraser C.M."/>
        </authorList>
    </citation>
    <scope>NUCLEOTIDE SEQUENCE [LARGE SCALE GENOMIC DNA]</scope>
    <source>
        <strain>ATCC 700084 / mc(2)155</strain>
    </source>
</reference>
<reference key="2">
    <citation type="journal article" date="2007" name="Genome Biol.">
        <title>Interrupted coding sequences in Mycobacterium smegmatis: authentic mutations or sequencing errors?</title>
        <authorList>
            <person name="Deshayes C."/>
            <person name="Perrodou E."/>
            <person name="Gallien S."/>
            <person name="Euphrasie D."/>
            <person name="Schaeffer C."/>
            <person name="Van-Dorsselaer A."/>
            <person name="Poch O."/>
            <person name="Lecompte O."/>
            <person name="Reyrat J.-M."/>
        </authorList>
    </citation>
    <scope>NUCLEOTIDE SEQUENCE [LARGE SCALE GENOMIC DNA]</scope>
    <source>
        <strain>ATCC 700084 / mc(2)155</strain>
    </source>
</reference>
<reference key="3">
    <citation type="journal article" date="2009" name="Genome Res.">
        <title>Ortho-proteogenomics: multiple proteomes investigation through orthology and a new MS-based protocol.</title>
        <authorList>
            <person name="Gallien S."/>
            <person name="Perrodou E."/>
            <person name="Carapito C."/>
            <person name="Deshayes C."/>
            <person name="Reyrat J.-M."/>
            <person name="Van Dorsselaer A."/>
            <person name="Poch O."/>
            <person name="Schaeffer C."/>
            <person name="Lecompte O."/>
        </authorList>
    </citation>
    <scope>NUCLEOTIDE SEQUENCE [LARGE SCALE GENOMIC DNA]</scope>
    <scope>IDENTIFICATION BY MASS SPECTROMETRY [LARGE SCALE ANALYSIS]</scope>
    <scope>CLEAVAGE OF INITIATOR METHIONINE</scope>
    <source>
        <strain>ATCC 700084 / mc(2)155</strain>
    </source>
</reference>
<accession>A0R1H6</accession>
<accession>I7FI79</accession>
<comment type="function">
    <text evidence="1">Transfers the 4'-phosphopantetheine moiety from coenzyme A to a Ser of acyl-carrier-protein.</text>
</comment>
<comment type="catalytic activity">
    <reaction evidence="1">
        <text>apo-[ACP] + CoA = holo-[ACP] + adenosine 3',5'-bisphosphate + H(+)</text>
        <dbReference type="Rhea" id="RHEA:12068"/>
        <dbReference type="Rhea" id="RHEA-COMP:9685"/>
        <dbReference type="Rhea" id="RHEA-COMP:9690"/>
        <dbReference type="ChEBI" id="CHEBI:15378"/>
        <dbReference type="ChEBI" id="CHEBI:29999"/>
        <dbReference type="ChEBI" id="CHEBI:57287"/>
        <dbReference type="ChEBI" id="CHEBI:58343"/>
        <dbReference type="ChEBI" id="CHEBI:64479"/>
        <dbReference type="EC" id="2.7.8.7"/>
    </reaction>
</comment>
<comment type="cofactor">
    <cofactor evidence="1">
        <name>Mg(2+)</name>
        <dbReference type="ChEBI" id="CHEBI:18420"/>
    </cofactor>
</comment>
<comment type="subcellular location">
    <subcellularLocation>
        <location evidence="1">Cytoplasm</location>
    </subcellularLocation>
</comment>
<comment type="similarity">
    <text evidence="1">Belongs to the P-Pant transferase superfamily. AcpS family.</text>
</comment>